<feature type="chain" id="PRO_1000058595" description="3-phosphoshikimate 1-carboxyvinyltransferase">
    <location>
        <begin position="1"/>
        <end position="433"/>
    </location>
</feature>
<feature type="active site" description="Proton acceptor" evidence="1">
    <location>
        <position position="317"/>
    </location>
</feature>
<feature type="binding site" evidence="1">
    <location>
        <position position="21"/>
    </location>
    <ligand>
        <name>3-phosphoshikimate</name>
        <dbReference type="ChEBI" id="CHEBI:145989"/>
    </ligand>
</feature>
<feature type="binding site" evidence="1">
    <location>
        <position position="21"/>
    </location>
    <ligand>
        <name>phosphoenolpyruvate</name>
        <dbReference type="ChEBI" id="CHEBI:58702"/>
    </ligand>
</feature>
<feature type="binding site" evidence="1">
    <location>
        <position position="22"/>
    </location>
    <ligand>
        <name>3-phosphoshikimate</name>
        <dbReference type="ChEBI" id="CHEBI:145989"/>
    </ligand>
</feature>
<feature type="binding site" evidence="1">
    <location>
        <position position="26"/>
    </location>
    <ligand>
        <name>3-phosphoshikimate</name>
        <dbReference type="ChEBI" id="CHEBI:145989"/>
    </ligand>
</feature>
<feature type="binding site" evidence="1">
    <location>
        <position position="92"/>
    </location>
    <ligand>
        <name>phosphoenolpyruvate</name>
        <dbReference type="ChEBI" id="CHEBI:58702"/>
    </ligand>
</feature>
<feature type="binding site" evidence="1">
    <location>
        <position position="120"/>
    </location>
    <ligand>
        <name>phosphoenolpyruvate</name>
        <dbReference type="ChEBI" id="CHEBI:58702"/>
    </ligand>
</feature>
<feature type="binding site" evidence="1">
    <location>
        <position position="166"/>
    </location>
    <ligand>
        <name>3-phosphoshikimate</name>
        <dbReference type="ChEBI" id="CHEBI:145989"/>
    </ligand>
</feature>
<feature type="binding site" evidence="1">
    <location>
        <position position="168"/>
    </location>
    <ligand>
        <name>3-phosphoshikimate</name>
        <dbReference type="ChEBI" id="CHEBI:145989"/>
    </ligand>
</feature>
<feature type="binding site" evidence="1">
    <location>
        <position position="168"/>
    </location>
    <ligand>
        <name>phosphoenolpyruvate</name>
        <dbReference type="ChEBI" id="CHEBI:58702"/>
    </ligand>
</feature>
<feature type="binding site" evidence="1">
    <location>
        <position position="317"/>
    </location>
    <ligand>
        <name>3-phosphoshikimate</name>
        <dbReference type="ChEBI" id="CHEBI:145989"/>
    </ligand>
</feature>
<feature type="binding site" evidence="1">
    <location>
        <position position="344"/>
    </location>
    <ligand>
        <name>3-phosphoshikimate</name>
        <dbReference type="ChEBI" id="CHEBI:145989"/>
    </ligand>
</feature>
<feature type="binding site" evidence="1">
    <location>
        <position position="348"/>
    </location>
    <ligand>
        <name>phosphoenolpyruvate</name>
        <dbReference type="ChEBI" id="CHEBI:58702"/>
    </ligand>
</feature>
<feature type="binding site" evidence="1">
    <location>
        <position position="391"/>
    </location>
    <ligand>
        <name>phosphoenolpyruvate</name>
        <dbReference type="ChEBI" id="CHEBI:58702"/>
    </ligand>
</feature>
<accession>A4XMY4</accession>
<organism>
    <name type="scientific">Caldicellulosiruptor saccharolyticus (strain ATCC 43494 / DSM 8903 / Tp8T 6331)</name>
    <dbReference type="NCBI Taxonomy" id="351627"/>
    <lineage>
        <taxon>Bacteria</taxon>
        <taxon>Bacillati</taxon>
        <taxon>Bacillota</taxon>
        <taxon>Bacillota incertae sedis</taxon>
        <taxon>Caldicellulosiruptorales</taxon>
        <taxon>Caldicellulosiruptoraceae</taxon>
        <taxon>Caldicellulosiruptor</taxon>
    </lineage>
</organism>
<reference key="1">
    <citation type="submission" date="2007-04" db="EMBL/GenBank/DDBJ databases">
        <title>Genome sequence of the thermophilic hydrogen-producing bacterium Caldicellulosiruptor saccharolyticus DSM 8903.</title>
        <authorList>
            <person name="Copeland A."/>
            <person name="Lucas S."/>
            <person name="Lapidus A."/>
            <person name="Barry K."/>
            <person name="Detter J.C."/>
            <person name="Glavina del Rio T."/>
            <person name="Hammon N."/>
            <person name="Israni S."/>
            <person name="Dalin E."/>
            <person name="Tice H."/>
            <person name="Pitluck S."/>
            <person name="Kiss H."/>
            <person name="Brettin T."/>
            <person name="Bruce D."/>
            <person name="Han C."/>
            <person name="Schmutz J."/>
            <person name="Larimer F."/>
            <person name="Land M."/>
            <person name="Hauser L."/>
            <person name="Kyrpides N."/>
            <person name="Lykidis A."/>
            <person name="van de Werken H.J.G."/>
            <person name="Verhaart M.R.A."/>
            <person name="VanFossen A.L."/>
            <person name="Lewis D.L."/>
            <person name="Nichols J.D."/>
            <person name="Goorissen H.P."/>
            <person name="van Niel E.W.J."/>
            <person name="Stams F.J.M."/>
            <person name="Willquist K.U."/>
            <person name="Ward D.E."/>
            <person name="van der Oost J."/>
            <person name="Kelly R.M."/>
            <person name="Kengen S.M.W."/>
            <person name="Richardson P."/>
        </authorList>
    </citation>
    <scope>NUCLEOTIDE SEQUENCE [LARGE SCALE GENOMIC DNA]</scope>
    <source>
        <strain>ATCC 43494 / DSM 8903 / Tp8T 6331</strain>
    </source>
</reference>
<comment type="function">
    <text evidence="1">Catalyzes the transfer of the enolpyruvyl moiety of phosphoenolpyruvate (PEP) to the 5-hydroxyl of shikimate-3-phosphate (S3P) to produce enolpyruvyl shikimate-3-phosphate and inorganic phosphate.</text>
</comment>
<comment type="catalytic activity">
    <reaction evidence="1">
        <text>3-phosphoshikimate + phosphoenolpyruvate = 5-O-(1-carboxyvinyl)-3-phosphoshikimate + phosphate</text>
        <dbReference type="Rhea" id="RHEA:21256"/>
        <dbReference type="ChEBI" id="CHEBI:43474"/>
        <dbReference type="ChEBI" id="CHEBI:57701"/>
        <dbReference type="ChEBI" id="CHEBI:58702"/>
        <dbReference type="ChEBI" id="CHEBI:145989"/>
        <dbReference type="EC" id="2.5.1.19"/>
    </reaction>
    <physiologicalReaction direction="left-to-right" evidence="1">
        <dbReference type="Rhea" id="RHEA:21257"/>
    </physiologicalReaction>
</comment>
<comment type="pathway">
    <text evidence="1">Metabolic intermediate biosynthesis; chorismate biosynthesis; chorismate from D-erythrose 4-phosphate and phosphoenolpyruvate: step 6/7.</text>
</comment>
<comment type="subunit">
    <text evidence="1">Monomer.</text>
</comment>
<comment type="subcellular location">
    <subcellularLocation>
        <location evidence="1">Cytoplasm</location>
    </subcellularLocation>
</comment>
<comment type="similarity">
    <text evidence="1">Belongs to the EPSP synthase family.</text>
</comment>
<sequence>MNVKIEGRRKIRAKVAIPSDKSISHRSIMIGSLARGTTEIENFLFAEDCLSTINCFKKLGAEIEIKNDKVIVKGKNYSLSVPQQVLDCGNSGTTTRLLLGILSTQEFEAVLDGDSSLRKRPMKRVTQPLSQMGASFEFLEKEDCLPIKVKGKKNLKPIDYTLPVSSAQVKSALIFAALKAEGKSVIKELPMSRDHTELMLKSAGADIATCFENGFYKIEVMPSNLEALKIKVPSDISSAAFFIVLALICEDSEVIIENCILNPTRTGIIDILKQMGADIEIGNVEIQNGELVGTIVARSSNLKGVVVDKNDIPRIIDEIPILAVAAAFADGKTIIDNASELRVKESDRIKTTLEMLRNFGAECYELENGLEIVGSRDNLKAGIVNSYNDHRIAMAASILACAVEGESTILNAECASISFPNFYEILLGHSKKV</sequence>
<dbReference type="EC" id="2.5.1.19" evidence="1"/>
<dbReference type="EMBL" id="CP000679">
    <property type="protein sequence ID" value="ABP68269.1"/>
    <property type="molecule type" value="Genomic_DNA"/>
</dbReference>
<dbReference type="RefSeq" id="WP_011918185.1">
    <property type="nucleotide sequence ID" value="NC_009437.1"/>
</dbReference>
<dbReference type="SMR" id="A4XMY4"/>
<dbReference type="STRING" id="351627.Csac_2700"/>
<dbReference type="KEGG" id="csc:Csac_2700"/>
<dbReference type="eggNOG" id="COG0128">
    <property type="taxonomic scope" value="Bacteria"/>
</dbReference>
<dbReference type="HOGENOM" id="CLU_024321_0_1_9"/>
<dbReference type="OrthoDB" id="9809920at2"/>
<dbReference type="UniPathway" id="UPA00053">
    <property type="reaction ID" value="UER00089"/>
</dbReference>
<dbReference type="Proteomes" id="UP000000256">
    <property type="component" value="Chromosome"/>
</dbReference>
<dbReference type="GO" id="GO:0005737">
    <property type="term" value="C:cytoplasm"/>
    <property type="evidence" value="ECO:0007669"/>
    <property type="project" value="UniProtKB-SubCell"/>
</dbReference>
<dbReference type="GO" id="GO:0003866">
    <property type="term" value="F:3-phosphoshikimate 1-carboxyvinyltransferase activity"/>
    <property type="evidence" value="ECO:0007669"/>
    <property type="project" value="UniProtKB-UniRule"/>
</dbReference>
<dbReference type="GO" id="GO:0008652">
    <property type="term" value="P:amino acid biosynthetic process"/>
    <property type="evidence" value="ECO:0007669"/>
    <property type="project" value="UniProtKB-KW"/>
</dbReference>
<dbReference type="GO" id="GO:0009073">
    <property type="term" value="P:aromatic amino acid family biosynthetic process"/>
    <property type="evidence" value="ECO:0007669"/>
    <property type="project" value="UniProtKB-KW"/>
</dbReference>
<dbReference type="GO" id="GO:0009423">
    <property type="term" value="P:chorismate biosynthetic process"/>
    <property type="evidence" value="ECO:0007669"/>
    <property type="project" value="UniProtKB-UniRule"/>
</dbReference>
<dbReference type="CDD" id="cd01556">
    <property type="entry name" value="EPSP_synthase"/>
    <property type="match status" value="1"/>
</dbReference>
<dbReference type="FunFam" id="3.65.10.10:FF:000005">
    <property type="entry name" value="3-phosphoshikimate 1-carboxyvinyltransferase"/>
    <property type="match status" value="1"/>
</dbReference>
<dbReference type="FunFam" id="3.65.10.10:FF:000006">
    <property type="entry name" value="3-phosphoshikimate 1-carboxyvinyltransferase"/>
    <property type="match status" value="1"/>
</dbReference>
<dbReference type="Gene3D" id="3.65.10.10">
    <property type="entry name" value="Enolpyruvate transferase domain"/>
    <property type="match status" value="2"/>
</dbReference>
<dbReference type="HAMAP" id="MF_00210">
    <property type="entry name" value="EPSP_synth"/>
    <property type="match status" value="1"/>
</dbReference>
<dbReference type="InterPro" id="IPR001986">
    <property type="entry name" value="Enolpyruvate_Tfrase_dom"/>
</dbReference>
<dbReference type="InterPro" id="IPR036968">
    <property type="entry name" value="Enolpyruvate_Tfrase_sf"/>
</dbReference>
<dbReference type="InterPro" id="IPR006264">
    <property type="entry name" value="EPSP_synthase"/>
</dbReference>
<dbReference type="InterPro" id="IPR023193">
    <property type="entry name" value="EPSP_synthase_CS"/>
</dbReference>
<dbReference type="InterPro" id="IPR013792">
    <property type="entry name" value="RNA3'P_cycl/enolpyr_Trfase_a/b"/>
</dbReference>
<dbReference type="NCBIfam" id="TIGR01356">
    <property type="entry name" value="aroA"/>
    <property type="match status" value="1"/>
</dbReference>
<dbReference type="PANTHER" id="PTHR21090">
    <property type="entry name" value="AROM/DEHYDROQUINATE SYNTHASE"/>
    <property type="match status" value="1"/>
</dbReference>
<dbReference type="PANTHER" id="PTHR21090:SF5">
    <property type="entry name" value="PENTAFUNCTIONAL AROM POLYPEPTIDE"/>
    <property type="match status" value="1"/>
</dbReference>
<dbReference type="Pfam" id="PF00275">
    <property type="entry name" value="EPSP_synthase"/>
    <property type="match status" value="1"/>
</dbReference>
<dbReference type="PIRSF" id="PIRSF000505">
    <property type="entry name" value="EPSPS"/>
    <property type="match status" value="1"/>
</dbReference>
<dbReference type="SUPFAM" id="SSF55205">
    <property type="entry name" value="EPT/RTPC-like"/>
    <property type="match status" value="1"/>
</dbReference>
<dbReference type="PROSITE" id="PS00104">
    <property type="entry name" value="EPSP_SYNTHASE_1"/>
    <property type="match status" value="1"/>
</dbReference>
<dbReference type="PROSITE" id="PS00885">
    <property type="entry name" value="EPSP_SYNTHASE_2"/>
    <property type="match status" value="1"/>
</dbReference>
<gene>
    <name evidence="1" type="primary">aroA</name>
    <name type="ordered locus">Csac_2700</name>
</gene>
<name>AROA_CALS8</name>
<evidence type="ECO:0000255" key="1">
    <source>
        <dbReference type="HAMAP-Rule" id="MF_00210"/>
    </source>
</evidence>
<proteinExistence type="inferred from homology"/>
<protein>
    <recommendedName>
        <fullName evidence="1">3-phosphoshikimate 1-carboxyvinyltransferase</fullName>
        <ecNumber evidence="1">2.5.1.19</ecNumber>
    </recommendedName>
    <alternativeName>
        <fullName evidence="1">5-enolpyruvylshikimate-3-phosphate synthase</fullName>
        <shortName evidence="1">EPSP synthase</shortName>
        <shortName evidence="1">EPSPS</shortName>
    </alternativeName>
</protein>
<keyword id="KW-0028">Amino-acid biosynthesis</keyword>
<keyword id="KW-0057">Aromatic amino acid biosynthesis</keyword>
<keyword id="KW-0963">Cytoplasm</keyword>
<keyword id="KW-0808">Transferase</keyword>